<dbReference type="EMBL" id="AB001381">
    <property type="protein sequence ID" value="BAA19970.1"/>
    <property type="molecule type" value="Genomic_DNA"/>
</dbReference>
<dbReference type="EMBL" id="AB033486">
    <property type="protein sequence ID" value="BAA85334.1"/>
    <property type="molecule type" value="Genomic_DNA"/>
</dbReference>
<dbReference type="SMR" id="P0A3H6"/>
<dbReference type="GO" id="GO:0005829">
    <property type="term" value="C:cytosol"/>
    <property type="evidence" value="ECO:0007669"/>
    <property type="project" value="TreeGrafter"/>
</dbReference>
<dbReference type="GO" id="GO:0003677">
    <property type="term" value="F:DNA binding"/>
    <property type="evidence" value="ECO:0007669"/>
    <property type="project" value="UniProtKB-KW"/>
</dbReference>
<dbReference type="GO" id="GO:0030527">
    <property type="term" value="F:structural constituent of chromatin"/>
    <property type="evidence" value="ECO:0007669"/>
    <property type="project" value="InterPro"/>
</dbReference>
<dbReference type="GO" id="GO:0030261">
    <property type="term" value="P:chromosome condensation"/>
    <property type="evidence" value="ECO:0007669"/>
    <property type="project" value="UniProtKB-KW"/>
</dbReference>
<dbReference type="CDD" id="cd14435">
    <property type="entry name" value="SPO1_TF1_like"/>
    <property type="match status" value="1"/>
</dbReference>
<dbReference type="FunFam" id="4.10.520.10:FF:000005">
    <property type="entry name" value="Integration host factor"/>
    <property type="match status" value="1"/>
</dbReference>
<dbReference type="Gene3D" id="4.10.520.10">
    <property type="entry name" value="IHF-like DNA-binding proteins"/>
    <property type="match status" value="1"/>
</dbReference>
<dbReference type="InterPro" id="IPR000119">
    <property type="entry name" value="Hist_DNA-bd"/>
</dbReference>
<dbReference type="InterPro" id="IPR020816">
    <property type="entry name" value="Histone-like_DNA-bd_CS"/>
</dbReference>
<dbReference type="InterPro" id="IPR010992">
    <property type="entry name" value="IHF-like_DNA-bd_dom_sf"/>
</dbReference>
<dbReference type="PANTHER" id="PTHR33175">
    <property type="entry name" value="DNA-BINDING PROTEIN HU"/>
    <property type="match status" value="1"/>
</dbReference>
<dbReference type="PANTHER" id="PTHR33175:SF3">
    <property type="entry name" value="DNA-BINDING PROTEIN HU-BETA"/>
    <property type="match status" value="1"/>
</dbReference>
<dbReference type="Pfam" id="PF00216">
    <property type="entry name" value="Bac_DNA_binding"/>
    <property type="match status" value="1"/>
</dbReference>
<dbReference type="PRINTS" id="PR01727">
    <property type="entry name" value="DNABINDINGHU"/>
</dbReference>
<dbReference type="SMART" id="SM00411">
    <property type="entry name" value="BHL"/>
    <property type="match status" value="1"/>
</dbReference>
<dbReference type="SUPFAM" id="SSF47729">
    <property type="entry name" value="IHF-like DNA-binding proteins"/>
    <property type="match status" value="1"/>
</dbReference>
<dbReference type="PROSITE" id="PS00045">
    <property type="entry name" value="HISTONE_LIKE"/>
    <property type="match status" value="1"/>
</dbReference>
<protein>
    <recommendedName>
        <fullName>DNA-binding protein HU 1</fullName>
    </recommendedName>
    <alternativeName>
        <fullName>HSl</fullName>
    </alternativeName>
</protein>
<comment type="function">
    <text evidence="1">Histone-like DNA-binding protein which is capable of wrapping DNA to stabilize it, and thus to prevent its denaturation under extreme environmental conditions.</text>
</comment>
<comment type="subunit">
    <text evidence="1">Homodimer.</text>
</comment>
<comment type="similarity">
    <text evidence="2">Belongs to the bacterial histone-like protein family.</text>
</comment>
<organism>
    <name type="scientific">Streptomyces lividans</name>
    <dbReference type="NCBI Taxonomy" id="1916"/>
    <lineage>
        <taxon>Bacteria</taxon>
        <taxon>Bacillati</taxon>
        <taxon>Actinomycetota</taxon>
        <taxon>Actinomycetes</taxon>
        <taxon>Kitasatosporales</taxon>
        <taxon>Streptomycetaceae</taxon>
        <taxon>Streptomyces</taxon>
    </lineage>
</organism>
<gene>
    <name type="primary">hup1</name>
    <name type="synonym">hup</name>
</gene>
<keyword id="KW-0226">DNA condensation</keyword>
<keyword id="KW-0238">DNA-binding</keyword>
<feature type="chain" id="PRO_0000104976" description="DNA-binding protein HU 1">
    <location>
        <begin position="1"/>
        <end position="93"/>
    </location>
</feature>
<reference key="1">
    <citation type="journal article" date="1997" name="Biochim. Biophys. Acta">
        <title>Cloning and sequencing of the hup gene encoding the histone-like protein HSl of Streptomyces lividans.</title>
        <authorList>
            <person name="Yokoyama E."/>
            <person name="Doi K."/>
            <person name="Ogata S."/>
        </authorList>
    </citation>
    <scope>NUCLEOTIDE SEQUENCE [GENOMIC DNA]</scope>
    <source>
        <strain>TK24</strain>
    </source>
</reference>
<sequence length="93" mass="9851">MNRSELVAALADRAEVTRKDADAVLAAFAEVVGDIVSKGDEKVTIPGFLTFERTHRAARTARNPQTGEPIQIPAGYSVKVSAGSKLKEAAKGK</sequence>
<evidence type="ECO:0000250" key="1"/>
<evidence type="ECO:0000305" key="2"/>
<name>DBH1_STRLI</name>
<accession>P0A3H6</accession>
<accession>O06447</accession>
<proteinExistence type="inferred from homology"/>